<accession>P25154</accession>
<accession>G1SMY7</accession>
<sequence length="737" mass="81663">MERQVLLSEPEEAAALYRVLSRQPALSAACLGPDVTTQYGGRYRTVHTEWTQRDLERMENIRFCRQYLVFHDEDSVVFAGPAGSSVETRGELLSRESPSGTLKAVLRKAGGTGPGEEKQFLEVWEKNRKLKSFNLSALEKHGPVYEDDCFGCLSWSHSETHLLYVAEKKRPKAESFFQTKALDVSAGEDETARPKKPDQAVKGDQFVFYEDWGESMVSKSTPVLCVLDVESGNISVLEGVPENVSPGQAFWAPGDTGVVFVGWWHEPFRLGIRFCTNRRSALYYVDLTGGKYELLSDDSLAISSPRLSPDQCRIVYLRYPSLVPHHQCSQLCLYDWYTKVTSVVVDIVPRQLGENFSGIYCSLLPLGCWSADSQRVVFDSAQRSRQDLFVVDTQTGSVTSLTAGGSGGSWKLLTIDQDLMVAQFSTPSLPPSLKVGFLPPAGKEQSVSWVSLEEAEPIPDIHWGIRVLQPPPEQENAQYAGLDFEAILMQPGSPSDKTQVPMVVMPHGGPHSSFVTAWMLFPAMLCKMGFAVLLVNYRGSTGFGQDSILSLPGNVGQQDVKDVQFAVEQVLREERFDTGRVALMGGSHGGFLSCHLIGQYPETYGACVARNPVTNIASMMGSTDIPDCAKSCRCVVEAGFPYSNDCLPDLSVWADMLDKSPIKYIPQVKTPLLLMLGQEDRRVPFKQGIEYYRALKARSVPVRLLLYPKSTHALSEVEVESDSFMNAVLWLRTHLGT</sequence>
<comment type="function">
    <text evidence="1 2">This enzyme catalyzes the hydrolysis of the N-terminal peptide bond of an N-acetylated peptide to generate an N-acetylated amino acid and a peptide with a free N-terminus (By similarity). It preferentially cleaves off Ac-Ala, Ac-Met and Ac-Ser (By similarity). Also, involved in the degradation of oxidized and glycated proteins (By similarity).</text>
</comment>
<comment type="catalytic activity">
    <reaction evidence="1">
        <text>Cleavage of an N-acetyl or N-formyl amino acid from the N-terminus of a polypeptide.</text>
        <dbReference type="EC" id="3.4.19.1"/>
    </reaction>
</comment>
<comment type="activity regulation">
    <text evidence="3">Homotetramerization is required for activity. Tetramerization results in the formation of a gated channel which is involved in substrate selection and substrate access to the catalytic sites.</text>
</comment>
<comment type="subunit">
    <text evidence="4">Homotetramer.</text>
</comment>
<comment type="subcellular location">
    <subcellularLocation>
        <location evidence="2">Cytoplasm</location>
    </subcellularLocation>
</comment>
<comment type="similarity">
    <text evidence="7">Belongs to the peptidase S9C family.</text>
</comment>
<protein>
    <recommendedName>
        <fullName>Acylamino-acid-releasing enzyme</fullName>
        <shortName>AARE</shortName>
        <ecNumber evidence="1">3.4.19.1</ecNumber>
    </recommendedName>
    <alternativeName>
        <fullName>Acyl-peptide hydrolase</fullName>
        <shortName>APH</shortName>
    </alternativeName>
    <alternativeName>
        <fullName>Acylaminoacyl-peptidase</fullName>
    </alternativeName>
</protein>
<name>ACPH_RABIT</name>
<gene>
    <name type="primary">APEH</name>
</gene>
<proteinExistence type="evidence at protein level"/>
<reference evidence="8" key="1">
    <citation type="journal article" date="2011" name="Nature">
        <title>A high-resolution map of human evolutionary constraint using 29 mammals.</title>
        <authorList>
            <person name="Lindblad-Toh K."/>
            <person name="Garber M."/>
            <person name="Zuk O."/>
            <person name="Lin M.F."/>
            <person name="Parker B.J."/>
            <person name="Washietl S."/>
            <person name="Kheradpour P."/>
            <person name="Ernst J."/>
            <person name="Jordan G."/>
            <person name="Mauceli E."/>
            <person name="Ward L.D."/>
            <person name="Lowe C.B."/>
            <person name="Holloway A.K."/>
            <person name="Clamp M."/>
            <person name="Gnerre S."/>
            <person name="Alfoldi J."/>
            <person name="Beal K."/>
            <person name="Chang J."/>
            <person name="Clawson H."/>
            <person name="Cuff J."/>
            <person name="Di Palma F."/>
            <person name="Fitzgerald S."/>
            <person name="Flicek P."/>
            <person name="Guttman M."/>
            <person name="Hubisz M.J."/>
            <person name="Jaffe D.B."/>
            <person name="Jungreis I."/>
            <person name="Kent W.J."/>
            <person name="Kostka D."/>
            <person name="Lara M."/>
            <person name="Martins A.L."/>
            <person name="Massingham T."/>
            <person name="Moltke I."/>
            <person name="Raney B.J."/>
            <person name="Rasmussen M.D."/>
            <person name="Robinson J."/>
            <person name="Stark A."/>
            <person name="Vilella A.J."/>
            <person name="Wen J."/>
            <person name="Xie X."/>
            <person name="Zody M.C."/>
            <person name="Baldwin J."/>
            <person name="Bloom T."/>
            <person name="Chin C.W."/>
            <person name="Heiman D."/>
            <person name="Nicol R."/>
            <person name="Nusbaum C."/>
            <person name="Young S."/>
            <person name="Wilkinson J."/>
            <person name="Worley K.C."/>
            <person name="Kovar C.L."/>
            <person name="Muzny D.M."/>
            <person name="Gibbs R.A."/>
            <person name="Cree A."/>
            <person name="Dihn H.H."/>
            <person name="Fowler G."/>
            <person name="Jhangiani S."/>
            <person name="Joshi V."/>
            <person name="Lee S."/>
            <person name="Lewis L.R."/>
            <person name="Nazareth L.V."/>
            <person name="Okwuonu G."/>
            <person name="Santibanez J."/>
            <person name="Warren W.C."/>
            <person name="Mardis E.R."/>
            <person name="Weinstock G.M."/>
            <person name="Wilson R.K."/>
            <person name="Delehaunty K."/>
            <person name="Dooling D."/>
            <person name="Fronik C."/>
            <person name="Fulton L."/>
            <person name="Fulton B."/>
            <person name="Graves T."/>
            <person name="Minx P."/>
            <person name="Sodergren E."/>
            <person name="Birney E."/>
            <person name="Margulies E.H."/>
            <person name="Herrero J."/>
            <person name="Green E.D."/>
            <person name="Haussler D."/>
            <person name="Siepel A."/>
            <person name="Goldman N."/>
            <person name="Pollard K.S."/>
            <person name="Pedersen J.S."/>
            <person name="Lander E.S."/>
            <person name="Kellis M."/>
        </authorList>
    </citation>
    <scope>NUCLEOTIDE SEQUENCE [LARGE SCALE GENOMIC DNA]</scope>
    <source>
        <strain evidence="8">Thorbecke inbred</strain>
    </source>
</reference>
<reference key="2">
    <citation type="journal article" date="1991" name="Anal. Biochem.">
        <title>N-terminal sequence analysis of N alpha-acetylated proteins after unblocking with N-acylaminoacyl-peptide hydrolase.</title>
        <authorList>
            <person name="Krishna R.G."/>
            <person name="Chin C.C.Q."/>
            <person name="Wold F."/>
        </authorList>
    </citation>
    <scope>PROTEIN SEQUENCE OF 1-6</scope>
    <scope>ACETYLATION AT MET-1</scope>
    <source>
        <tissue>Muscle</tissue>
    </source>
</reference>
<feature type="chain" id="PRO_0000122433" description="Acylamino-acid-releasing enzyme">
    <location>
        <begin position="1"/>
        <end position="737"/>
    </location>
</feature>
<feature type="active site" description="Charge relay system" evidence="5">
    <location>
        <position position="587"/>
    </location>
</feature>
<feature type="active site" description="Charge relay system" evidence="5">
    <location>
        <position position="680"/>
    </location>
</feature>
<feature type="active site" description="Charge relay system" evidence="2">
    <location>
        <position position="712"/>
    </location>
</feature>
<feature type="modified residue" description="N-acetylmethionine" evidence="6">
    <location>
        <position position="1"/>
    </location>
</feature>
<feature type="modified residue" description="Phosphoserine" evidence="2">
    <location>
        <position position="185"/>
    </location>
</feature>
<keyword id="KW-0007">Acetylation</keyword>
<keyword id="KW-0963">Cytoplasm</keyword>
<keyword id="KW-0903">Direct protein sequencing</keyword>
<keyword id="KW-0378">Hydrolase</keyword>
<keyword id="KW-0597">Phosphoprotein</keyword>
<keyword id="KW-1185">Reference proteome</keyword>
<organism>
    <name type="scientific">Oryctolagus cuniculus</name>
    <name type="common">Rabbit</name>
    <dbReference type="NCBI Taxonomy" id="9986"/>
    <lineage>
        <taxon>Eukaryota</taxon>
        <taxon>Metazoa</taxon>
        <taxon>Chordata</taxon>
        <taxon>Craniata</taxon>
        <taxon>Vertebrata</taxon>
        <taxon>Euteleostomi</taxon>
        <taxon>Mammalia</taxon>
        <taxon>Eutheria</taxon>
        <taxon>Euarchontoglires</taxon>
        <taxon>Glires</taxon>
        <taxon>Lagomorpha</taxon>
        <taxon>Leporidae</taxon>
        <taxon>Oryctolagus</taxon>
    </lineage>
</organism>
<dbReference type="EC" id="3.4.19.1" evidence="1"/>
<dbReference type="EMBL" id="AAGW02044088">
    <property type="status" value="NOT_ANNOTATED_CDS"/>
    <property type="molecule type" value="Genomic_DNA"/>
</dbReference>
<dbReference type="PIR" id="A49792">
    <property type="entry name" value="A49792"/>
</dbReference>
<dbReference type="SMR" id="P25154"/>
<dbReference type="STRING" id="9986.ENSOCUP00000004319"/>
<dbReference type="MEROPS" id="S09.004"/>
<dbReference type="iPTMnet" id="P25154"/>
<dbReference type="PaxDb" id="9986-ENSOCUP00000023356"/>
<dbReference type="Ensembl" id="ENSOCUT00000004990.3">
    <property type="protein sequence ID" value="ENSOCUP00000004319.3"/>
    <property type="gene ID" value="ENSOCUG00000004990.3"/>
</dbReference>
<dbReference type="GeneTree" id="ENSGT00390000013172"/>
<dbReference type="HOGENOM" id="CLU_014230_1_1_1"/>
<dbReference type="InParanoid" id="P25154"/>
<dbReference type="Proteomes" id="UP000001811">
    <property type="component" value="Chromosome 9"/>
</dbReference>
<dbReference type="Bgee" id="ENSOCUG00000004990">
    <property type="expression patterns" value="Expressed in kidney and 17 other cell types or tissues"/>
</dbReference>
<dbReference type="GO" id="GO:0005829">
    <property type="term" value="C:cytosol"/>
    <property type="evidence" value="ECO:0007669"/>
    <property type="project" value="Ensembl"/>
</dbReference>
<dbReference type="GO" id="GO:0031965">
    <property type="term" value="C:nuclear membrane"/>
    <property type="evidence" value="ECO:0007669"/>
    <property type="project" value="Ensembl"/>
</dbReference>
<dbReference type="GO" id="GO:0042802">
    <property type="term" value="F:identical protein binding"/>
    <property type="evidence" value="ECO:0007669"/>
    <property type="project" value="Ensembl"/>
</dbReference>
<dbReference type="GO" id="GO:0008242">
    <property type="term" value="F:omega peptidase activity"/>
    <property type="evidence" value="ECO:0007669"/>
    <property type="project" value="UniProtKB-EC"/>
</dbReference>
<dbReference type="GO" id="GO:0004252">
    <property type="term" value="F:serine-type endopeptidase activity"/>
    <property type="evidence" value="ECO:0007669"/>
    <property type="project" value="Ensembl"/>
</dbReference>
<dbReference type="GO" id="GO:0050435">
    <property type="term" value="P:amyloid-beta metabolic process"/>
    <property type="evidence" value="ECO:0007669"/>
    <property type="project" value="Ensembl"/>
</dbReference>
<dbReference type="GO" id="GO:0006508">
    <property type="term" value="P:proteolysis"/>
    <property type="evidence" value="ECO:0007669"/>
    <property type="project" value="Ensembl"/>
</dbReference>
<dbReference type="FunFam" id="2.120.10.30:FF:000047">
    <property type="entry name" value="Acylamino-acid-releasing enzyme"/>
    <property type="match status" value="1"/>
</dbReference>
<dbReference type="FunFam" id="3.40.50.1820:FF:000043">
    <property type="entry name" value="acylamino-acid-releasing enzyme"/>
    <property type="match status" value="1"/>
</dbReference>
<dbReference type="Gene3D" id="3.40.50.1820">
    <property type="entry name" value="alpha/beta hydrolase"/>
    <property type="match status" value="1"/>
</dbReference>
<dbReference type="Gene3D" id="2.120.10.30">
    <property type="entry name" value="TolB, C-terminal domain"/>
    <property type="match status" value="1"/>
</dbReference>
<dbReference type="InterPro" id="IPR011042">
    <property type="entry name" value="6-blade_b-propeller_TolB-like"/>
</dbReference>
<dbReference type="InterPro" id="IPR045550">
    <property type="entry name" value="AARE_N"/>
</dbReference>
<dbReference type="InterPro" id="IPR029058">
    <property type="entry name" value="AB_hydrolase_fold"/>
</dbReference>
<dbReference type="InterPro" id="IPR002471">
    <property type="entry name" value="Pept_S9_AS"/>
</dbReference>
<dbReference type="InterPro" id="IPR001375">
    <property type="entry name" value="Peptidase_S9_cat"/>
</dbReference>
<dbReference type="PANTHER" id="PTHR42776:SF4">
    <property type="entry name" value="ACYLAMINO-ACID-RELEASING ENZYME"/>
    <property type="match status" value="1"/>
</dbReference>
<dbReference type="PANTHER" id="PTHR42776">
    <property type="entry name" value="SERINE PEPTIDASE S9 FAMILY MEMBER"/>
    <property type="match status" value="1"/>
</dbReference>
<dbReference type="Pfam" id="PF19283">
    <property type="entry name" value="APEH_N"/>
    <property type="match status" value="1"/>
</dbReference>
<dbReference type="Pfam" id="PF00326">
    <property type="entry name" value="Peptidase_S9"/>
    <property type="match status" value="1"/>
</dbReference>
<dbReference type="SUPFAM" id="SSF53474">
    <property type="entry name" value="alpha/beta-Hydrolases"/>
    <property type="match status" value="1"/>
</dbReference>
<dbReference type="SUPFAM" id="SSF50993">
    <property type="entry name" value="Peptidase/esterase 'gauge' domain"/>
    <property type="match status" value="1"/>
</dbReference>
<dbReference type="PROSITE" id="PS00708">
    <property type="entry name" value="PRO_ENDOPEP_SER"/>
    <property type="match status" value="1"/>
</dbReference>
<evidence type="ECO:0000250" key="1">
    <source>
        <dbReference type="UniProtKB" id="P13676"/>
    </source>
</evidence>
<evidence type="ECO:0000250" key="2">
    <source>
        <dbReference type="UniProtKB" id="P13798"/>
    </source>
</evidence>
<evidence type="ECO:0000250" key="3">
    <source>
        <dbReference type="UniProtKB" id="P19205"/>
    </source>
</evidence>
<evidence type="ECO:0000250" key="4">
    <source>
        <dbReference type="UniProtKB" id="P80227"/>
    </source>
</evidence>
<evidence type="ECO:0000255" key="5">
    <source>
        <dbReference type="PROSITE-ProRule" id="PRU10084"/>
    </source>
</evidence>
<evidence type="ECO:0000269" key="6">
    <source>
    </source>
</evidence>
<evidence type="ECO:0000305" key="7"/>
<evidence type="ECO:0000312" key="8">
    <source>
        <dbReference type="Proteomes" id="UP000001811"/>
    </source>
</evidence>